<organism>
    <name type="scientific">Streptococcus mutans serotype c (strain ATCC 700610 / UA159)</name>
    <dbReference type="NCBI Taxonomy" id="210007"/>
    <lineage>
        <taxon>Bacteria</taxon>
        <taxon>Bacillati</taxon>
        <taxon>Bacillota</taxon>
        <taxon>Bacilli</taxon>
        <taxon>Lactobacillales</taxon>
        <taxon>Streptococcaceae</taxon>
        <taxon>Streptococcus</taxon>
    </lineage>
</organism>
<gene>
    <name type="primary">rmlB</name>
    <name type="ordered locus">SMU_1457</name>
</gene>
<dbReference type="EC" id="4.2.1.46" evidence="2"/>
<dbReference type="EMBL" id="D78182">
    <property type="protein sequence ID" value="BAA11249.1"/>
    <property type="molecule type" value="Genomic_DNA"/>
</dbReference>
<dbReference type="EMBL" id="AE014133">
    <property type="protein sequence ID" value="AAN59116.1"/>
    <property type="molecule type" value="Genomic_DNA"/>
</dbReference>
<dbReference type="RefSeq" id="NP_721810.1">
    <property type="nucleotide sequence ID" value="NC_004350.2"/>
</dbReference>
<dbReference type="PDB" id="1KEP">
    <property type="method" value="X-ray"/>
    <property type="resolution" value="1.80 A"/>
    <property type="chains" value="A/B=5-344"/>
</dbReference>
<dbReference type="PDB" id="1KET">
    <property type="method" value="X-ray"/>
    <property type="resolution" value="1.80 A"/>
    <property type="chains" value="A/B=5-344"/>
</dbReference>
<dbReference type="PDBsum" id="1KEP"/>
<dbReference type="PDBsum" id="1KET"/>
<dbReference type="SMR" id="P95780"/>
<dbReference type="STRING" id="210007.SMU_1457"/>
<dbReference type="DrugBank" id="DB03751">
    <property type="generic name" value="2'deoxy-Thymidine-5'-Diphospho-Alpha-D-Glucose"/>
</dbReference>
<dbReference type="DrugBank" id="DB03161">
    <property type="generic name" value="Thymidine-5'-diphospho-beta-D-xylose"/>
</dbReference>
<dbReference type="KEGG" id="smu:SMU_1457"/>
<dbReference type="PATRIC" id="fig|210007.7.peg.1296"/>
<dbReference type="eggNOG" id="COG1088">
    <property type="taxonomic scope" value="Bacteria"/>
</dbReference>
<dbReference type="HOGENOM" id="CLU_007383_1_14_9"/>
<dbReference type="OrthoDB" id="9811743at2"/>
<dbReference type="PhylomeDB" id="P95780"/>
<dbReference type="UniPathway" id="UPA00124"/>
<dbReference type="EvolutionaryTrace" id="P95780"/>
<dbReference type="Proteomes" id="UP000002512">
    <property type="component" value="Chromosome"/>
</dbReference>
<dbReference type="GO" id="GO:0008460">
    <property type="term" value="F:dTDP-glucose 4,6-dehydratase activity"/>
    <property type="evidence" value="ECO:0000250"/>
    <property type="project" value="UniProtKB"/>
</dbReference>
<dbReference type="GO" id="GO:0019305">
    <property type="term" value="P:dTDP-rhamnose biosynthetic process"/>
    <property type="evidence" value="ECO:0007669"/>
    <property type="project" value="UniProtKB-UniPathway"/>
</dbReference>
<dbReference type="GO" id="GO:0009103">
    <property type="term" value="P:lipopolysaccharide biosynthetic process"/>
    <property type="evidence" value="ECO:0007669"/>
    <property type="project" value="UniProtKB-KW"/>
</dbReference>
<dbReference type="GO" id="GO:0000271">
    <property type="term" value="P:polysaccharide biosynthetic process"/>
    <property type="evidence" value="ECO:0000250"/>
    <property type="project" value="UniProtKB"/>
</dbReference>
<dbReference type="CDD" id="cd05246">
    <property type="entry name" value="dTDP_GD_SDR_e"/>
    <property type="match status" value="1"/>
</dbReference>
<dbReference type="FunFam" id="3.40.50.720:FF:000108">
    <property type="entry name" value="dTDP-glucose 4,6-dehydratase"/>
    <property type="match status" value="1"/>
</dbReference>
<dbReference type="Gene3D" id="3.40.50.720">
    <property type="entry name" value="NAD(P)-binding Rossmann-like Domain"/>
    <property type="match status" value="1"/>
</dbReference>
<dbReference type="Gene3D" id="3.90.25.10">
    <property type="entry name" value="UDP-galactose 4-epimerase, domain 1"/>
    <property type="match status" value="1"/>
</dbReference>
<dbReference type="InterPro" id="IPR005888">
    <property type="entry name" value="dTDP_Gluc_deHydtase"/>
</dbReference>
<dbReference type="InterPro" id="IPR016040">
    <property type="entry name" value="NAD(P)-bd_dom"/>
</dbReference>
<dbReference type="InterPro" id="IPR036291">
    <property type="entry name" value="NAD(P)-bd_dom_sf"/>
</dbReference>
<dbReference type="NCBIfam" id="TIGR01181">
    <property type="entry name" value="dTDP_gluc_dehyt"/>
    <property type="match status" value="1"/>
</dbReference>
<dbReference type="PANTHER" id="PTHR43000">
    <property type="entry name" value="DTDP-D-GLUCOSE 4,6-DEHYDRATASE-RELATED"/>
    <property type="match status" value="1"/>
</dbReference>
<dbReference type="Pfam" id="PF16363">
    <property type="entry name" value="GDP_Man_Dehyd"/>
    <property type="match status" value="1"/>
</dbReference>
<dbReference type="SUPFAM" id="SSF51735">
    <property type="entry name" value="NAD(P)-binding Rossmann-fold domains"/>
    <property type="match status" value="1"/>
</dbReference>
<accession>P95780</accession>
<comment type="function">
    <text evidence="2">Catalyzes the dehydration of dTDP-D-glucose to form dTDP-6-deoxy-D-xylo-4-hexulose via a three-step process involving oxidation, dehydration and reduction.</text>
</comment>
<comment type="catalytic activity">
    <reaction evidence="2">
        <text>dTDP-alpha-D-glucose = dTDP-4-dehydro-6-deoxy-alpha-D-glucose + H2O</text>
        <dbReference type="Rhea" id="RHEA:17221"/>
        <dbReference type="ChEBI" id="CHEBI:15377"/>
        <dbReference type="ChEBI" id="CHEBI:57477"/>
        <dbReference type="ChEBI" id="CHEBI:57649"/>
        <dbReference type="EC" id="4.2.1.46"/>
    </reaction>
</comment>
<comment type="cofactor">
    <cofactor evidence="4">
        <name>NAD(+)</name>
        <dbReference type="ChEBI" id="CHEBI:57540"/>
    </cofactor>
    <text evidence="4">Binds 1 NAD(+) per subunit.</text>
</comment>
<comment type="pathway">
    <text evidence="3">Carbohydrate biosynthesis; dTDP-L-rhamnose biosynthesis.</text>
</comment>
<comment type="subunit">
    <text evidence="4">Homodimer.</text>
</comment>
<comment type="similarity">
    <text evidence="5">Belongs to the NAD(P)-dependent epimerase/dehydratase family. dTDP-glucose dehydratase subfamily.</text>
</comment>
<protein>
    <recommendedName>
        <fullName evidence="2">dTDP-glucose 4,6-dehydratase</fullName>
        <ecNumber evidence="2">4.2.1.46</ecNumber>
    </recommendedName>
</protein>
<keyword id="KW-0002">3D-structure</keyword>
<keyword id="KW-0448">Lipopolysaccharide biosynthesis</keyword>
<keyword id="KW-0456">Lyase</keyword>
<keyword id="KW-0520">NAD</keyword>
<keyword id="KW-1185">Reference proteome</keyword>
<proteinExistence type="evidence at protein level"/>
<sequence length="348" mass="39281">MTEYKNIIVTGGAGFIGSNFVHYVYNNHPDVHVTVLDKLTYAGNRANLEEILGDRVELVVGDIADSELVDKLAAKADAIVHYAAESHNDNSLKDPSPFIYTNFVGTYILLEAARKYDIRFHHVSTDEVYGDLPLREDLPGHGEGPGEKFTAETKYNPSSPYSSTKAASDLIVKAWVRSFGVKATISNCSNNYGPYQHIEKFIPRQITNILSGIKPKLYGEGKNVRDWIHTNDHSTGVWAILTKGRIGETYLIGADGEKNNKEVLELILEKMSQPKNAYDHVTDRAGHDLRYAIDSTKLREELGWKPQFTNFEEGLEDTIKWYTEHEDWWKAEKEAVEANYAKTQKILN</sequence>
<feature type="chain" id="PRO_0000183247" description="dTDP-glucose 4,6-dehydratase">
    <location>
        <begin position="1"/>
        <end position="348"/>
    </location>
</feature>
<feature type="active site" description="Proton donor" evidence="2">
    <location>
        <position position="126"/>
    </location>
</feature>
<feature type="active site" description="Proton acceptor" evidence="2">
    <location>
        <position position="127"/>
    </location>
</feature>
<feature type="active site" description="Proton acceptor" evidence="6 7 8">
    <location>
        <position position="161"/>
    </location>
</feature>
<feature type="binding site" evidence="4 7 8">
    <location>
        <begin position="15"/>
        <end position="16"/>
    </location>
    <ligand>
        <name>NAD(+)</name>
        <dbReference type="ChEBI" id="CHEBI:57540"/>
    </ligand>
</feature>
<feature type="binding site" evidence="4 7 8">
    <location>
        <begin position="37"/>
        <end position="40"/>
    </location>
    <ligand>
        <name>NAD(+)</name>
        <dbReference type="ChEBI" id="CHEBI:57540"/>
    </ligand>
</feature>
<feature type="binding site" evidence="4 7 8">
    <location>
        <begin position="62"/>
        <end position="63"/>
    </location>
    <ligand>
        <name>NAD(+)</name>
        <dbReference type="ChEBI" id="CHEBI:57540"/>
    </ligand>
</feature>
<feature type="binding site" evidence="4 7 8">
    <location>
        <begin position="82"/>
        <end position="86"/>
    </location>
    <ligand>
        <name>NAD(+)</name>
        <dbReference type="ChEBI" id="CHEBI:57540"/>
    </ligand>
</feature>
<feature type="binding site" evidence="1">
    <location>
        <position position="86"/>
    </location>
    <ligand>
        <name>substrate</name>
    </ligand>
</feature>
<feature type="binding site" evidence="4 8">
    <location>
        <position position="88"/>
    </location>
    <ligand>
        <name>substrate</name>
    </ligand>
</feature>
<feature type="binding site" evidence="4 7 8">
    <location>
        <position position="101"/>
    </location>
    <ligand>
        <name>NAD(+)</name>
        <dbReference type="ChEBI" id="CHEBI:57540"/>
    </ligand>
</feature>
<feature type="binding site" evidence="4 7">
    <location>
        <position position="125"/>
    </location>
    <ligand>
        <name>substrate</name>
    </ligand>
</feature>
<feature type="binding site" evidence="6 7 8">
    <location>
        <begin position="161"/>
        <end position="165"/>
    </location>
    <ligand>
        <name>NAD(+)</name>
        <dbReference type="ChEBI" id="CHEBI:57540"/>
    </ligand>
</feature>
<feature type="binding site" evidence="4 8">
    <location>
        <position position="190"/>
    </location>
    <ligand>
        <name>substrate</name>
    </ligand>
</feature>
<feature type="binding site" evidence="4 7 8">
    <location>
        <position position="191"/>
    </location>
    <ligand>
        <name>NAD(+)</name>
        <dbReference type="ChEBI" id="CHEBI:57540"/>
    </ligand>
</feature>
<feature type="binding site" evidence="4 7 8">
    <location>
        <begin position="200"/>
        <end position="205"/>
    </location>
    <ligand>
        <name>substrate</name>
    </ligand>
</feature>
<feature type="binding site" evidence="4 8">
    <location>
        <begin position="216"/>
        <end position="218"/>
    </location>
    <ligand>
        <name>substrate</name>
    </ligand>
</feature>
<feature type="binding site" evidence="4 8">
    <location>
        <position position="225"/>
    </location>
    <ligand>
        <name>substrate</name>
    </ligand>
</feature>
<feature type="binding site" evidence="4 8">
    <location>
        <position position="260"/>
    </location>
    <ligand>
        <name>substrate</name>
    </ligand>
</feature>
<feature type="binding site" evidence="6 8">
    <location>
        <begin position="283"/>
        <end position="287"/>
    </location>
    <ligand>
        <name>substrate</name>
    </ligand>
</feature>
<feature type="sequence conflict" description="In Ref. 1; BAA11249." evidence="5" ref="1">
    <original>R</original>
    <variation>H</variation>
    <location>
        <position position="45"/>
    </location>
</feature>
<feature type="sequence conflict" description="In Ref. 1; BAA11249." evidence="5" ref="1">
    <original>I</original>
    <variation>T</variation>
    <location>
        <position position="108"/>
    </location>
</feature>
<feature type="sequence conflict" description="In Ref. 1; BAA11249." evidence="5" ref="1">
    <original>N</original>
    <variation>D</variation>
    <location>
        <position position="276"/>
    </location>
</feature>
<feature type="strand" evidence="9">
    <location>
        <begin position="5"/>
        <end position="10"/>
    </location>
</feature>
<feature type="turn" evidence="9">
    <location>
        <begin position="11"/>
        <end position="13"/>
    </location>
</feature>
<feature type="helix" evidence="9">
    <location>
        <begin position="15"/>
        <end position="27"/>
    </location>
</feature>
<feature type="strand" evidence="9">
    <location>
        <begin position="32"/>
        <end position="37"/>
    </location>
</feature>
<feature type="helix" evidence="9">
    <location>
        <begin position="45"/>
        <end position="47"/>
    </location>
</feature>
<feature type="helix" evidence="9">
    <location>
        <begin position="49"/>
        <end position="51"/>
    </location>
</feature>
<feature type="strand" evidence="9">
    <location>
        <begin position="53"/>
        <end position="60"/>
    </location>
</feature>
<feature type="helix" evidence="9">
    <location>
        <begin position="66"/>
        <end position="73"/>
    </location>
</feature>
<feature type="strand" evidence="9">
    <location>
        <begin position="77"/>
        <end position="81"/>
    </location>
</feature>
<feature type="helix" evidence="9">
    <location>
        <begin position="88"/>
        <end position="93"/>
    </location>
</feature>
<feature type="helix" evidence="9">
    <location>
        <begin position="96"/>
        <end position="102"/>
    </location>
</feature>
<feature type="helix" evidence="9">
    <location>
        <begin position="104"/>
        <end position="116"/>
    </location>
</feature>
<feature type="strand" evidence="9">
    <location>
        <begin position="119"/>
        <end position="125"/>
    </location>
</feature>
<feature type="helix" evidence="9">
    <location>
        <begin position="126"/>
        <end position="129"/>
    </location>
</feature>
<feature type="helix" evidence="9">
    <location>
        <begin position="135"/>
        <end position="137"/>
    </location>
</feature>
<feature type="turn" evidence="9">
    <location>
        <begin position="139"/>
        <end position="142"/>
    </location>
</feature>
<feature type="strand" evidence="9">
    <location>
        <begin position="147"/>
        <end position="149"/>
    </location>
</feature>
<feature type="helix" evidence="9">
    <location>
        <begin position="160"/>
        <end position="179"/>
    </location>
</feature>
<feature type="strand" evidence="9">
    <location>
        <begin position="183"/>
        <end position="188"/>
    </location>
</feature>
<feature type="strand" evidence="9">
    <location>
        <begin position="191"/>
        <end position="193"/>
    </location>
</feature>
<feature type="helix" evidence="9">
    <location>
        <begin position="201"/>
        <end position="210"/>
    </location>
</feature>
<feature type="strand" evidence="9">
    <location>
        <begin position="216"/>
        <end position="218"/>
    </location>
</feature>
<feature type="strand" evidence="9">
    <location>
        <begin position="224"/>
        <end position="226"/>
    </location>
</feature>
<feature type="helix" evidence="9">
    <location>
        <begin position="230"/>
        <end position="243"/>
    </location>
</feature>
<feature type="strand" evidence="9">
    <location>
        <begin position="249"/>
        <end position="252"/>
    </location>
</feature>
<feature type="strand" evidence="9">
    <location>
        <begin position="257"/>
        <end position="259"/>
    </location>
</feature>
<feature type="helix" evidence="9">
    <location>
        <begin position="260"/>
        <end position="270"/>
    </location>
</feature>
<feature type="strand" evidence="9">
    <location>
        <begin position="278"/>
        <end position="281"/>
    </location>
</feature>
<feature type="helix" evidence="9">
    <location>
        <begin position="296"/>
        <end position="302"/>
    </location>
</feature>
<feature type="helix" evidence="9">
    <location>
        <begin position="311"/>
        <end position="324"/>
    </location>
</feature>
<feature type="helix" evidence="9">
    <location>
        <begin position="326"/>
        <end position="328"/>
    </location>
</feature>
<feature type="turn" evidence="9">
    <location>
        <begin position="329"/>
        <end position="332"/>
    </location>
</feature>
<feature type="helix" evidence="9">
    <location>
        <begin position="333"/>
        <end position="341"/>
    </location>
</feature>
<evidence type="ECO:0000250" key="1">
    <source>
        <dbReference type="UniProtKB" id="P26391"/>
    </source>
</evidence>
<evidence type="ECO:0000250" key="2">
    <source>
        <dbReference type="UniProtKB" id="P27830"/>
    </source>
</evidence>
<evidence type="ECO:0000250" key="3">
    <source>
        <dbReference type="UniProtKB" id="P37759"/>
    </source>
</evidence>
<evidence type="ECO:0000269" key="4">
    <source>
    </source>
</evidence>
<evidence type="ECO:0000305" key="5"/>
<evidence type="ECO:0000305" key="6">
    <source>
    </source>
</evidence>
<evidence type="ECO:0007744" key="7">
    <source>
        <dbReference type="PDB" id="1KEP"/>
    </source>
</evidence>
<evidence type="ECO:0007744" key="8">
    <source>
        <dbReference type="PDB" id="1KET"/>
    </source>
</evidence>
<evidence type="ECO:0007829" key="9">
    <source>
        <dbReference type="PDB" id="1KET"/>
    </source>
</evidence>
<name>RMLB_STRMU</name>
<reference key="1">
    <citation type="submission" date="1997-02" db="EMBL/GenBank/DDBJ databases">
        <authorList>
            <person name="Tsukioka Y."/>
            <person name="Yamashita Y."/>
            <person name="Nakano Y."/>
            <person name="Oho T."/>
            <person name="Koga T."/>
        </authorList>
    </citation>
    <scope>NUCLEOTIDE SEQUENCE [GENOMIC DNA]</scope>
    <source>
        <strain>XC</strain>
    </source>
</reference>
<reference key="2">
    <citation type="journal article" date="2002" name="Proc. Natl. Acad. Sci. U.S.A.">
        <title>Genome sequence of Streptococcus mutans UA159, a cariogenic dental pathogen.</title>
        <authorList>
            <person name="Ajdic D.J."/>
            <person name="McShan W.M."/>
            <person name="McLaughlin R.E."/>
            <person name="Savic G."/>
            <person name="Chang J."/>
            <person name="Carson M.B."/>
            <person name="Primeaux C."/>
            <person name="Tian R."/>
            <person name="Kenton S."/>
            <person name="Jia H.G."/>
            <person name="Lin S.P."/>
            <person name="Qian Y."/>
            <person name="Li S."/>
            <person name="Zhu H."/>
            <person name="Najar F.Z."/>
            <person name="Lai H."/>
            <person name="White J."/>
            <person name="Roe B.A."/>
            <person name="Ferretti J.J."/>
        </authorList>
    </citation>
    <scope>NUCLEOTIDE SEQUENCE [LARGE SCALE GENOMIC DNA]</scope>
    <source>
        <strain>ATCC 700610 / UA159</strain>
    </source>
</reference>
<reference key="3">
    <citation type="journal article" date="2002" name="Structure">
        <title>Toward a structural understanding of the dehydratase mechanism.</title>
        <authorList>
            <person name="Allard S.T."/>
            <person name="Beis K."/>
            <person name="Giraud M.-F."/>
            <person name="Hegeman A.D."/>
            <person name="Gross J.W."/>
            <person name="Wilmouth R.C."/>
            <person name="Whitfield C."/>
            <person name="Graninger M."/>
            <person name="Messner P."/>
            <person name="Allen A.G."/>
            <person name="Maskell D.J."/>
            <person name="Naismith J.H."/>
        </authorList>
    </citation>
    <scope>X-RAY CRYSTALLOGRAPHY (1.8 ANGSTROMS) OF 5-344 IN COMPLEX WITH SUBSTRATE AND NAD</scope>
    <scope>COFACTOR</scope>
    <scope>SUBUNIT</scope>
</reference>